<evidence type="ECO:0000250" key="1">
    <source>
        <dbReference type="UniProtKB" id="Q8JZW4"/>
    </source>
</evidence>
<evidence type="ECO:0000250" key="2">
    <source>
        <dbReference type="UniProtKB" id="Q99829"/>
    </source>
</evidence>
<evidence type="ECO:0000255" key="3">
    <source>
        <dbReference type="PROSITE-ProRule" id="PRU00041"/>
    </source>
</evidence>
<evidence type="ECO:0000255" key="4">
    <source>
        <dbReference type="PROSITE-ProRule" id="PRU00219"/>
    </source>
</evidence>
<evidence type="ECO:0000256" key="5">
    <source>
        <dbReference type="SAM" id="MobiDB-lite"/>
    </source>
</evidence>
<evidence type="ECO:0000269" key="6">
    <source>
    </source>
</evidence>
<evidence type="ECO:0000269" key="7">
    <source>
    </source>
</evidence>
<evidence type="ECO:0000303" key="8">
    <source>
    </source>
</evidence>
<evidence type="ECO:0000303" key="9">
    <source>
    </source>
</evidence>
<evidence type="ECO:0000305" key="10"/>
<evidence type="ECO:0000312" key="11">
    <source>
        <dbReference type="HGNC" id="HGNC:2318"/>
    </source>
</evidence>
<evidence type="ECO:0007744" key="12">
    <source>
    </source>
</evidence>
<gene>
    <name evidence="11" type="primary">CPNE5</name>
    <name evidence="8" type="synonym">KIAA1599</name>
</gene>
<keyword id="KW-0025">Alternative splicing</keyword>
<keyword id="KW-0106">Calcium</keyword>
<keyword id="KW-0966">Cell projection</keyword>
<keyword id="KW-0221">Differentiation</keyword>
<keyword id="KW-0479">Metal-binding</keyword>
<keyword id="KW-0597">Phosphoprotein</keyword>
<keyword id="KW-1267">Proteomics identification</keyword>
<keyword id="KW-1185">Reference proteome</keyword>
<keyword id="KW-0677">Repeat</keyword>
<feature type="chain" id="PRO_0000144843" description="Copine-5">
    <location>
        <begin position="1"/>
        <end position="593"/>
    </location>
</feature>
<feature type="domain" description="C2 1" evidence="3">
    <location>
        <begin position="2"/>
        <end position="134"/>
    </location>
</feature>
<feature type="domain" description="C2 2" evidence="3">
    <location>
        <begin position="161"/>
        <end position="284"/>
    </location>
</feature>
<feature type="domain" description="VWFA" evidence="4">
    <location>
        <begin position="328"/>
        <end position="554"/>
    </location>
</feature>
<feature type="region of interest" description="Disordered" evidence="5">
    <location>
        <begin position="562"/>
        <end position="593"/>
    </location>
</feature>
<feature type="compositionally biased region" description="Low complexity" evidence="5">
    <location>
        <begin position="572"/>
        <end position="581"/>
    </location>
</feature>
<feature type="binding site" evidence="3">
    <location>
        <position position="38"/>
    </location>
    <ligand>
        <name>Ca(2+)</name>
        <dbReference type="ChEBI" id="CHEBI:29108"/>
        <label>1</label>
    </ligand>
</feature>
<feature type="binding site" evidence="3">
    <location>
        <position position="38"/>
    </location>
    <ligand>
        <name>Ca(2+)</name>
        <dbReference type="ChEBI" id="CHEBI:29108"/>
        <label>2</label>
    </ligand>
</feature>
<feature type="binding site" evidence="3">
    <location>
        <position position="44"/>
    </location>
    <ligand>
        <name>Ca(2+)</name>
        <dbReference type="ChEBI" id="CHEBI:29108"/>
        <label>1</label>
    </ligand>
</feature>
<feature type="binding site" evidence="3">
    <location>
        <position position="98"/>
    </location>
    <ligand>
        <name>Ca(2+)</name>
        <dbReference type="ChEBI" id="CHEBI:29108"/>
        <label>1</label>
    </ligand>
</feature>
<feature type="binding site" evidence="3">
    <location>
        <position position="98"/>
    </location>
    <ligand>
        <name>Ca(2+)</name>
        <dbReference type="ChEBI" id="CHEBI:29108"/>
        <label>2</label>
    </ligand>
</feature>
<feature type="binding site" evidence="3">
    <location>
        <position position="100"/>
    </location>
    <ligand>
        <name>Ca(2+)</name>
        <dbReference type="ChEBI" id="CHEBI:29108"/>
        <label>1</label>
    </ligand>
</feature>
<feature type="binding site" evidence="3">
    <location>
        <position position="100"/>
    </location>
    <ligand>
        <name>Ca(2+)</name>
        <dbReference type="ChEBI" id="CHEBI:29108"/>
        <label>2</label>
    </ligand>
</feature>
<feature type="binding site" evidence="3">
    <location>
        <position position="100"/>
    </location>
    <ligand>
        <name>Ca(2+)</name>
        <dbReference type="ChEBI" id="CHEBI:29108"/>
        <label>3</label>
    </ligand>
</feature>
<feature type="binding site" evidence="3">
    <location>
        <position position="103"/>
    </location>
    <ligand>
        <name>Ca(2+)</name>
        <dbReference type="ChEBI" id="CHEBI:29108"/>
        <label>3</label>
    </ligand>
</feature>
<feature type="binding site" evidence="3">
    <location>
        <position position="108"/>
    </location>
    <ligand>
        <name>Ca(2+)</name>
        <dbReference type="ChEBI" id="CHEBI:29108"/>
        <label>3</label>
    </ligand>
</feature>
<feature type="binding site" evidence="3">
    <location>
        <position position="110"/>
    </location>
    <ligand>
        <name>Ca(2+)</name>
        <dbReference type="ChEBI" id="CHEBI:29108"/>
        <label>2</label>
    </ligand>
</feature>
<feature type="binding site" evidence="3">
    <location>
        <position position="110"/>
    </location>
    <ligand>
        <name>Ca(2+)</name>
        <dbReference type="ChEBI" id="CHEBI:29108"/>
        <label>3</label>
    </ligand>
</feature>
<feature type="binding site" evidence="3">
    <location>
        <position position="192"/>
    </location>
    <ligand>
        <name>Ca(2+)</name>
        <dbReference type="ChEBI" id="CHEBI:29108"/>
        <label>4</label>
    </ligand>
</feature>
<feature type="binding site" evidence="3">
    <location>
        <position position="192"/>
    </location>
    <ligand>
        <name>Ca(2+)</name>
        <dbReference type="ChEBI" id="CHEBI:29108"/>
        <label>5</label>
    </ligand>
</feature>
<feature type="binding site" evidence="3">
    <location>
        <position position="198"/>
    </location>
    <ligand>
        <name>Ca(2+)</name>
        <dbReference type="ChEBI" id="CHEBI:29108"/>
        <label>4</label>
    </ligand>
</feature>
<feature type="binding site" evidence="3">
    <location>
        <position position="254"/>
    </location>
    <ligand>
        <name>Ca(2+)</name>
        <dbReference type="ChEBI" id="CHEBI:29108"/>
        <label>4</label>
    </ligand>
</feature>
<feature type="binding site" evidence="3">
    <location>
        <position position="254"/>
    </location>
    <ligand>
        <name>Ca(2+)</name>
        <dbReference type="ChEBI" id="CHEBI:29108"/>
        <label>5</label>
    </ligand>
</feature>
<feature type="binding site" evidence="3">
    <location>
        <position position="256"/>
    </location>
    <ligand>
        <name>Ca(2+)</name>
        <dbReference type="ChEBI" id="CHEBI:29108"/>
        <label>4</label>
    </ligand>
</feature>
<feature type="binding site" evidence="3">
    <location>
        <position position="256"/>
    </location>
    <ligand>
        <name>Ca(2+)</name>
        <dbReference type="ChEBI" id="CHEBI:29108"/>
        <label>5</label>
    </ligand>
</feature>
<feature type="binding site" evidence="3">
    <location>
        <position position="262"/>
    </location>
    <ligand>
        <name>Ca(2+)</name>
        <dbReference type="ChEBI" id="CHEBI:29108"/>
        <label>5</label>
    </ligand>
</feature>
<feature type="modified residue" description="Phosphoserine" evidence="12">
    <location>
        <position position="19"/>
    </location>
</feature>
<feature type="modified residue" description="Phosphoserine" evidence="1">
    <location>
        <position position="103"/>
    </location>
</feature>
<feature type="modified residue" description="Phosphoserine" evidence="1">
    <location>
        <position position="140"/>
    </location>
</feature>
<feature type="splice variant" id="VSP_056535" description="In isoform 2." evidence="9">
    <location>
        <begin position="1"/>
        <end position="292"/>
    </location>
</feature>
<feature type="sequence variant" id="VAR_020358" description="In dbSNP:rs3734334.">
    <original>N</original>
    <variation>S</variation>
    <location>
        <position position="33"/>
    </location>
</feature>
<feature type="sequence variant" id="VAR_021954" description="In dbSNP:rs3830138.">
    <original>R</original>
    <variation>H</variation>
    <location>
        <position position="582"/>
    </location>
</feature>
<accession>Q9HCH3</accession>
<accession>Q7Z6C8</accession>
<proteinExistence type="evidence at protein level"/>
<protein>
    <recommendedName>
        <fullName evidence="10">Copine-5</fullName>
    </recommendedName>
    <alternativeName>
        <fullName evidence="2 11">Copine V</fullName>
    </alternativeName>
</protein>
<organism>
    <name type="scientific">Homo sapiens</name>
    <name type="common">Human</name>
    <dbReference type="NCBI Taxonomy" id="9606"/>
    <lineage>
        <taxon>Eukaryota</taxon>
        <taxon>Metazoa</taxon>
        <taxon>Chordata</taxon>
        <taxon>Craniata</taxon>
        <taxon>Vertebrata</taxon>
        <taxon>Euteleostomi</taxon>
        <taxon>Mammalia</taxon>
        <taxon>Eutheria</taxon>
        <taxon>Euarchontoglires</taxon>
        <taxon>Primates</taxon>
        <taxon>Haplorrhini</taxon>
        <taxon>Catarrhini</taxon>
        <taxon>Hominidae</taxon>
        <taxon>Homo</taxon>
    </lineage>
</organism>
<name>CPNE5_HUMAN</name>
<reference key="1">
    <citation type="journal article" date="2000" name="DNA Res.">
        <title>Prediction of the coding sequences of unidentified human genes. XVIII. The complete sequences of 100 new cDNA clones from brain which code for large proteins in vitro.</title>
        <authorList>
            <person name="Nagase T."/>
            <person name="Kikuno R."/>
            <person name="Nakayama M."/>
            <person name="Hirosawa M."/>
            <person name="Ohara O."/>
        </authorList>
    </citation>
    <scope>NUCLEOTIDE SEQUENCE [LARGE SCALE MRNA] (ISOFORM 1)</scope>
    <source>
        <tissue>Brain</tissue>
    </source>
</reference>
<reference key="2">
    <citation type="journal article" date="2003" name="Nature">
        <title>The DNA sequence and analysis of human chromosome 6.</title>
        <authorList>
            <person name="Mungall A.J."/>
            <person name="Palmer S.A."/>
            <person name="Sims S.K."/>
            <person name="Edwards C.A."/>
            <person name="Ashurst J.L."/>
            <person name="Wilming L."/>
            <person name="Jones M.C."/>
            <person name="Horton R."/>
            <person name="Hunt S.E."/>
            <person name="Scott C.E."/>
            <person name="Gilbert J.G.R."/>
            <person name="Clamp M.E."/>
            <person name="Bethel G."/>
            <person name="Milne S."/>
            <person name="Ainscough R."/>
            <person name="Almeida J.P."/>
            <person name="Ambrose K.D."/>
            <person name="Andrews T.D."/>
            <person name="Ashwell R.I.S."/>
            <person name="Babbage A.K."/>
            <person name="Bagguley C.L."/>
            <person name="Bailey J."/>
            <person name="Banerjee R."/>
            <person name="Barker D.J."/>
            <person name="Barlow K.F."/>
            <person name="Bates K."/>
            <person name="Beare D.M."/>
            <person name="Beasley H."/>
            <person name="Beasley O."/>
            <person name="Bird C.P."/>
            <person name="Blakey S.E."/>
            <person name="Bray-Allen S."/>
            <person name="Brook J."/>
            <person name="Brown A.J."/>
            <person name="Brown J.Y."/>
            <person name="Burford D.C."/>
            <person name="Burrill W."/>
            <person name="Burton J."/>
            <person name="Carder C."/>
            <person name="Carter N.P."/>
            <person name="Chapman J.C."/>
            <person name="Clark S.Y."/>
            <person name="Clark G."/>
            <person name="Clee C.M."/>
            <person name="Clegg S."/>
            <person name="Cobley V."/>
            <person name="Collier R.E."/>
            <person name="Collins J.E."/>
            <person name="Colman L.K."/>
            <person name="Corby N.R."/>
            <person name="Coville G.J."/>
            <person name="Culley K.M."/>
            <person name="Dhami P."/>
            <person name="Davies J."/>
            <person name="Dunn M."/>
            <person name="Earthrowl M.E."/>
            <person name="Ellington A.E."/>
            <person name="Evans K.A."/>
            <person name="Faulkner L."/>
            <person name="Francis M.D."/>
            <person name="Frankish A."/>
            <person name="Frankland J."/>
            <person name="French L."/>
            <person name="Garner P."/>
            <person name="Garnett J."/>
            <person name="Ghori M.J."/>
            <person name="Gilby L.M."/>
            <person name="Gillson C.J."/>
            <person name="Glithero R.J."/>
            <person name="Grafham D.V."/>
            <person name="Grant M."/>
            <person name="Gribble S."/>
            <person name="Griffiths C."/>
            <person name="Griffiths M.N.D."/>
            <person name="Hall R."/>
            <person name="Halls K.S."/>
            <person name="Hammond S."/>
            <person name="Harley J.L."/>
            <person name="Hart E.A."/>
            <person name="Heath P.D."/>
            <person name="Heathcott R."/>
            <person name="Holmes S.J."/>
            <person name="Howden P.J."/>
            <person name="Howe K.L."/>
            <person name="Howell G.R."/>
            <person name="Huckle E."/>
            <person name="Humphray S.J."/>
            <person name="Humphries M.D."/>
            <person name="Hunt A.R."/>
            <person name="Johnson C.M."/>
            <person name="Joy A.A."/>
            <person name="Kay M."/>
            <person name="Keenan S.J."/>
            <person name="Kimberley A.M."/>
            <person name="King A."/>
            <person name="Laird G.K."/>
            <person name="Langford C."/>
            <person name="Lawlor S."/>
            <person name="Leongamornlert D.A."/>
            <person name="Leversha M."/>
            <person name="Lloyd C.R."/>
            <person name="Lloyd D.M."/>
            <person name="Loveland J.E."/>
            <person name="Lovell J."/>
            <person name="Martin S."/>
            <person name="Mashreghi-Mohammadi M."/>
            <person name="Maslen G.L."/>
            <person name="Matthews L."/>
            <person name="McCann O.T."/>
            <person name="McLaren S.J."/>
            <person name="McLay K."/>
            <person name="McMurray A."/>
            <person name="Moore M.J.F."/>
            <person name="Mullikin J.C."/>
            <person name="Niblett D."/>
            <person name="Nickerson T."/>
            <person name="Novik K.L."/>
            <person name="Oliver K."/>
            <person name="Overton-Larty E.K."/>
            <person name="Parker A."/>
            <person name="Patel R."/>
            <person name="Pearce A.V."/>
            <person name="Peck A.I."/>
            <person name="Phillimore B.J.C.T."/>
            <person name="Phillips S."/>
            <person name="Plumb R.W."/>
            <person name="Porter K.M."/>
            <person name="Ramsey Y."/>
            <person name="Ranby S.A."/>
            <person name="Rice C.M."/>
            <person name="Ross M.T."/>
            <person name="Searle S.M."/>
            <person name="Sehra H.K."/>
            <person name="Sheridan E."/>
            <person name="Skuce C.D."/>
            <person name="Smith S."/>
            <person name="Smith M."/>
            <person name="Spraggon L."/>
            <person name="Squares S.L."/>
            <person name="Steward C.A."/>
            <person name="Sycamore N."/>
            <person name="Tamlyn-Hall G."/>
            <person name="Tester J."/>
            <person name="Theaker A.J."/>
            <person name="Thomas D.W."/>
            <person name="Thorpe A."/>
            <person name="Tracey A."/>
            <person name="Tromans A."/>
            <person name="Tubby B."/>
            <person name="Wall M."/>
            <person name="Wallis J.M."/>
            <person name="West A.P."/>
            <person name="White S.S."/>
            <person name="Whitehead S.L."/>
            <person name="Whittaker H."/>
            <person name="Wild A."/>
            <person name="Willey D.J."/>
            <person name="Wilmer T.E."/>
            <person name="Wood J.M."/>
            <person name="Wray P.W."/>
            <person name="Wyatt J.C."/>
            <person name="Young L."/>
            <person name="Younger R.M."/>
            <person name="Bentley D.R."/>
            <person name="Coulson A."/>
            <person name="Durbin R.M."/>
            <person name="Hubbard T."/>
            <person name="Sulston J.E."/>
            <person name="Dunham I."/>
            <person name="Rogers J."/>
            <person name="Beck S."/>
        </authorList>
    </citation>
    <scope>NUCLEOTIDE SEQUENCE [LARGE SCALE GENOMIC DNA]</scope>
</reference>
<reference key="3">
    <citation type="submission" date="2005-09" db="EMBL/GenBank/DDBJ databases">
        <authorList>
            <person name="Mural R.J."/>
            <person name="Istrail S."/>
            <person name="Sutton G."/>
            <person name="Florea L."/>
            <person name="Halpern A.L."/>
            <person name="Mobarry C.M."/>
            <person name="Lippert R."/>
            <person name="Walenz B."/>
            <person name="Shatkay H."/>
            <person name="Dew I."/>
            <person name="Miller J.R."/>
            <person name="Flanigan M.J."/>
            <person name="Edwards N.J."/>
            <person name="Bolanos R."/>
            <person name="Fasulo D."/>
            <person name="Halldorsson B.V."/>
            <person name="Hannenhalli S."/>
            <person name="Turner R."/>
            <person name="Yooseph S."/>
            <person name="Lu F."/>
            <person name="Nusskern D.R."/>
            <person name="Shue B.C."/>
            <person name="Zheng X.H."/>
            <person name="Zhong F."/>
            <person name="Delcher A.L."/>
            <person name="Huson D.H."/>
            <person name="Kravitz S.A."/>
            <person name="Mouchard L."/>
            <person name="Reinert K."/>
            <person name="Remington K.A."/>
            <person name="Clark A.G."/>
            <person name="Waterman M.S."/>
            <person name="Eichler E.E."/>
            <person name="Adams M.D."/>
            <person name="Hunkapiller M.W."/>
            <person name="Myers E.W."/>
            <person name="Venter J.C."/>
        </authorList>
    </citation>
    <scope>NUCLEOTIDE SEQUENCE [LARGE SCALE GENOMIC DNA]</scope>
</reference>
<reference key="4">
    <citation type="journal article" date="2004" name="Genome Res.">
        <title>The status, quality, and expansion of the NIH full-length cDNA project: the Mammalian Gene Collection (MGC).</title>
        <authorList>
            <consortium name="The MGC Project Team"/>
        </authorList>
    </citation>
    <scope>NUCLEOTIDE SEQUENCE [LARGE SCALE MRNA] (ISOFORM 2)</scope>
    <source>
        <tissue>Lymph</tissue>
    </source>
</reference>
<reference key="5">
    <citation type="journal article" date="2003" name="J. Leukoc. Biol.">
        <title>Tissue expression of copines and isolation of copines I and III from the cytosol of human neutrophils.</title>
        <authorList>
            <person name="Cowland J.B."/>
            <person name="Carter D."/>
            <person name="Bjerregaard M.D."/>
            <person name="Johnsen A.H."/>
            <person name="Borregaard N."/>
            <person name="Lollike K."/>
        </authorList>
    </citation>
    <scope>TISSUE SPECIFICITY</scope>
</reference>
<reference key="6">
    <citation type="journal article" date="2008" name="Proc. Natl. Acad. Sci. U.S.A.">
        <title>A quantitative atlas of mitotic phosphorylation.</title>
        <authorList>
            <person name="Dephoure N."/>
            <person name="Zhou C."/>
            <person name="Villen J."/>
            <person name="Beausoleil S.A."/>
            <person name="Bakalarski C.E."/>
            <person name="Elledge S.J."/>
            <person name="Gygi S.P."/>
        </authorList>
    </citation>
    <scope>PHOSPHORYLATION [LARGE SCALE ANALYSIS] AT SER-19</scope>
    <scope>IDENTIFICATION BY MASS SPECTROMETRY [LARGE SCALE ANALYSIS]</scope>
    <source>
        <tissue>Cervix carcinoma</tissue>
    </source>
</reference>
<reference key="7">
    <citation type="journal article" date="2013" name="J. Dermatol. Sci.">
        <title>SYT14L, especially its C2 domain, is involved in regulating melanocyte differentiation.</title>
        <authorList>
            <person name="Yoo J.C."/>
            <person name="Lim T.Y."/>
            <person name="Park J.S."/>
            <person name="Hah Y.S."/>
            <person name="Park N."/>
            <person name="Hong S.G."/>
            <person name="Park J.Y."/>
            <person name="Yoon T.J."/>
        </authorList>
    </citation>
    <scope>FUNCTION</scope>
    <scope>TISSUE SPECIFICITY</scope>
</reference>
<dbReference type="EMBL" id="AB046819">
    <property type="protein sequence ID" value="BAB13425.1"/>
    <property type="status" value="ALT_INIT"/>
    <property type="molecule type" value="mRNA"/>
</dbReference>
<dbReference type="EMBL" id="Z85996">
    <property type="status" value="NOT_ANNOTATED_CDS"/>
    <property type="molecule type" value="Genomic_DNA"/>
</dbReference>
<dbReference type="EMBL" id="CH471081">
    <property type="protein sequence ID" value="EAX03914.1"/>
    <property type="molecule type" value="Genomic_DNA"/>
</dbReference>
<dbReference type="EMBL" id="BC053872">
    <property type="protein sequence ID" value="AAH53872.1"/>
    <property type="molecule type" value="mRNA"/>
</dbReference>
<dbReference type="CCDS" id="CCDS4825.1">
    <molecule id="Q9HCH3-1"/>
</dbReference>
<dbReference type="CCDS" id="CCDS83078.1">
    <molecule id="Q9HCH3-2"/>
</dbReference>
<dbReference type="RefSeq" id="NP_001300947.1">
    <molecule id="Q9HCH3-2"/>
    <property type="nucleotide sequence ID" value="NM_001314018.2"/>
</dbReference>
<dbReference type="RefSeq" id="NP_001300948.1">
    <property type="nucleotide sequence ID" value="NM_001314019.1"/>
</dbReference>
<dbReference type="RefSeq" id="NP_001300949.1">
    <property type="nucleotide sequence ID" value="NM_001314020.1"/>
</dbReference>
<dbReference type="RefSeq" id="NP_001363819.1">
    <molecule id="Q9HCH3-2"/>
    <property type="nucleotide sequence ID" value="NM_001376890.1"/>
</dbReference>
<dbReference type="RefSeq" id="NP_065990.1">
    <molecule id="Q9HCH3-1"/>
    <property type="nucleotide sequence ID" value="NM_020939.2"/>
</dbReference>
<dbReference type="SMR" id="Q9HCH3"/>
<dbReference type="BioGRID" id="121724">
    <property type="interactions" value="40"/>
</dbReference>
<dbReference type="FunCoup" id="Q9HCH3">
    <property type="interactions" value="115"/>
</dbReference>
<dbReference type="IntAct" id="Q9HCH3">
    <property type="interactions" value="37"/>
</dbReference>
<dbReference type="STRING" id="9606.ENSP00000244751"/>
<dbReference type="iPTMnet" id="Q9HCH3"/>
<dbReference type="PhosphoSitePlus" id="Q9HCH3"/>
<dbReference type="SwissPalm" id="Q9HCH3"/>
<dbReference type="BioMuta" id="CPNE5"/>
<dbReference type="DMDM" id="13626179"/>
<dbReference type="jPOST" id="Q9HCH3"/>
<dbReference type="MassIVE" id="Q9HCH3"/>
<dbReference type="PaxDb" id="9606-ENSP00000244751"/>
<dbReference type="PeptideAtlas" id="Q9HCH3"/>
<dbReference type="ProteomicsDB" id="69394"/>
<dbReference type="ProteomicsDB" id="81717">
    <molecule id="Q9HCH3-1"/>
</dbReference>
<dbReference type="Pumba" id="Q9HCH3"/>
<dbReference type="Antibodypedia" id="29719">
    <property type="antibodies" value="103 antibodies from 20 providers"/>
</dbReference>
<dbReference type="DNASU" id="57699"/>
<dbReference type="Ensembl" id="ENST00000244751.7">
    <molecule id="Q9HCH3-1"/>
    <property type="protein sequence ID" value="ENSP00000244751.2"/>
    <property type="gene ID" value="ENSG00000124772.12"/>
</dbReference>
<dbReference type="Ensembl" id="ENST00000393189.2">
    <molecule id="Q9HCH3-2"/>
    <property type="protein sequence ID" value="ENSP00000376885.2"/>
    <property type="gene ID" value="ENSG00000124772.12"/>
</dbReference>
<dbReference type="GeneID" id="57699"/>
<dbReference type="KEGG" id="hsa:57699"/>
<dbReference type="MANE-Select" id="ENST00000244751.7">
    <property type="protein sequence ID" value="ENSP00000244751.2"/>
    <property type="RefSeq nucleotide sequence ID" value="NM_020939.2"/>
    <property type="RefSeq protein sequence ID" value="NP_065990.1"/>
</dbReference>
<dbReference type="UCSC" id="uc003omp.2">
    <molecule id="Q9HCH3-1"/>
    <property type="organism name" value="human"/>
</dbReference>
<dbReference type="AGR" id="HGNC:2318"/>
<dbReference type="CTD" id="57699"/>
<dbReference type="DisGeNET" id="57699"/>
<dbReference type="GeneCards" id="CPNE5"/>
<dbReference type="HGNC" id="HGNC:2318">
    <property type="gene designation" value="CPNE5"/>
</dbReference>
<dbReference type="HPA" id="ENSG00000124772">
    <property type="expression patterns" value="Group enriched (brain, heart muscle)"/>
</dbReference>
<dbReference type="MIM" id="604209">
    <property type="type" value="gene"/>
</dbReference>
<dbReference type="neXtProt" id="NX_Q9HCH3"/>
<dbReference type="OpenTargets" id="ENSG00000124772"/>
<dbReference type="PharmGKB" id="PA26835"/>
<dbReference type="VEuPathDB" id="HostDB:ENSG00000124772"/>
<dbReference type="eggNOG" id="KOG1327">
    <property type="taxonomic scope" value="Eukaryota"/>
</dbReference>
<dbReference type="GeneTree" id="ENSGT00940000156194"/>
<dbReference type="HOGENOM" id="CLU_020452_3_2_1"/>
<dbReference type="InParanoid" id="Q9HCH3"/>
<dbReference type="OMA" id="KEQATMQ"/>
<dbReference type="OrthoDB" id="5855668at2759"/>
<dbReference type="PAN-GO" id="Q9HCH3">
    <property type="GO annotations" value="3 GO annotations based on evolutionary models"/>
</dbReference>
<dbReference type="PhylomeDB" id="Q9HCH3"/>
<dbReference type="TreeFam" id="TF316419"/>
<dbReference type="PathwayCommons" id="Q9HCH3"/>
<dbReference type="SignaLink" id="Q9HCH3"/>
<dbReference type="BioGRID-ORCS" id="57699">
    <property type="hits" value="20 hits in 1140 CRISPR screens"/>
</dbReference>
<dbReference type="CD-CODE" id="FB4E32DD">
    <property type="entry name" value="Presynaptic clusters and postsynaptic densities"/>
</dbReference>
<dbReference type="ChiTaRS" id="CPNE5">
    <property type="organism name" value="human"/>
</dbReference>
<dbReference type="GenomeRNAi" id="57699"/>
<dbReference type="Pharos" id="Q9HCH3">
    <property type="development level" value="Tbio"/>
</dbReference>
<dbReference type="PRO" id="PR:Q9HCH3"/>
<dbReference type="Proteomes" id="UP000005640">
    <property type="component" value="Chromosome 6"/>
</dbReference>
<dbReference type="RNAct" id="Q9HCH3">
    <property type="molecule type" value="protein"/>
</dbReference>
<dbReference type="Bgee" id="ENSG00000124772">
    <property type="expression patterns" value="Expressed in cardiac muscle of right atrium and 147 other cell types or tissues"/>
</dbReference>
<dbReference type="ExpressionAtlas" id="Q9HCH3">
    <property type="expression patterns" value="baseline and differential"/>
</dbReference>
<dbReference type="GO" id="GO:0070062">
    <property type="term" value="C:extracellular exosome"/>
    <property type="evidence" value="ECO:0007005"/>
    <property type="project" value="UniProtKB"/>
</dbReference>
<dbReference type="GO" id="GO:0043005">
    <property type="term" value="C:neuron projection"/>
    <property type="evidence" value="ECO:0007669"/>
    <property type="project" value="Ensembl"/>
</dbReference>
<dbReference type="GO" id="GO:0043204">
    <property type="term" value="C:perikaryon"/>
    <property type="evidence" value="ECO:0007669"/>
    <property type="project" value="UniProtKB-SubCell"/>
</dbReference>
<dbReference type="GO" id="GO:0005886">
    <property type="term" value="C:plasma membrane"/>
    <property type="evidence" value="ECO:0000318"/>
    <property type="project" value="GO_Central"/>
</dbReference>
<dbReference type="GO" id="GO:0005544">
    <property type="term" value="F:calcium-dependent phospholipid binding"/>
    <property type="evidence" value="ECO:0000318"/>
    <property type="project" value="GO_Central"/>
</dbReference>
<dbReference type="GO" id="GO:0046872">
    <property type="term" value="F:metal ion binding"/>
    <property type="evidence" value="ECO:0007669"/>
    <property type="project" value="UniProtKB-KW"/>
</dbReference>
<dbReference type="GO" id="GO:0030154">
    <property type="term" value="P:cell differentiation"/>
    <property type="evidence" value="ECO:0007669"/>
    <property type="project" value="UniProtKB-KW"/>
</dbReference>
<dbReference type="GO" id="GO:0071277">
    <property type="term" value="P:cellular response to calcium ion"/>
    <property type="evidence" value="ECO:0000318"/>
    <property type="project" value="GO_Central"/>
</dbReference>
<dbReference type="GO" id="GO:1903861">
    <property type="term" value="P:positive regulation of dendrite extension"/>
    <property type="evidence" value="ECO:0000314"/>
    <property type="project" value="UniProtKB"/>
</dbReference>
<dbReference type="CDD" id="cd04048">
    <property type="entry name" value="C2A_Copine"/>
    <property type="match status" value="1"/>
</dbReference>
<dbReference type="CDD" id="cd04047">
    <property type="entry name" value="C2B_Copine"/>
    <property type="match status" value="1"/>
</dbReference>
<dbReference type="CDD" id="cd01459">
    <property type="entry name" value="vWA_copine_like"/>
    <property type="match status" value="1"/>
</dbReference>
<dbReference type="FunFam" id="2.60.40.150:FF:000117">
    <property type="entry name" value="copine-5 isoform X1"/>
    <property type="match status" value="1"/>
</dbReference>
<dbReference type="FunFam" id="2.60.40.150:FF:000013">
    <property type="entry name" value="copine-9 isoform X1"/>
    <property type="match status" value="1"/>
</dbReference>
<dbReference type="Gene3D" id="2.60.40.150">
    <property type="entry name" value="C2 domain"/>
    <property type="match status" value="2"/>
</dbReference>
<dbReference type="InterPro" id="IPR000008">
    <property type="entry name" value="C2_dom"/>
</dbReference>
<dbReference type="InterPro" id="IPR035892">
    <property type="entry name" value="C2_domain_sf"/>
</dbReference>
<dbReference type="InterPro" id="IPR037768">
    <property type="entry name" value="C2B_Copine"/>
</dbReference>
<dbReference type="InterPro" id="IPR045052">
    <property type="entry name" value="Copine"/>
</dbReference>
<dbReference type="InterPro" id="IPR010734">
    <property type="entry name" value="Copine_C"/>
</dbReference>
<dbReference type="InterPro" id="IPR002035">
    <property type="entry name" value="VWF_A"/>
</dbReference>
<dbReference type="InterPro" id="IPR036465">
    <property type="entry name" value="vWFA_dom_sf"/>
</dbReference>
<dbReference type="PANTHER" id="PTHR10857">
    <property type="entry name" value="COPINE"/>
    <property type="match status" value="1"/>
</dbReference>
<dbReference type="PANTHER" id="PTHR10857:SF51">
    <property type="entry name" value="COPINE-5"/>
    <property type="match status" value="1"/>
</dbReference>
<dbReference type="Pfam" id="PF00168">
    <property type="entry name" value="C2"/>
    <property type="match status" value="2"/>
</dbReference>
<dbReference type="Pfam" id="PF07002">
    <property type="entry name" value="Copine"/>
    <property type="match status" value="1"/>
</dbReference>
<dbReference type="SMART" id="SM00239">
    <property type="entry name" value="C2"/>
    <property type="match status" value="2"/>
</dbReference>
<dbReference type="SMART" id="SM00327">
    <property type="entry name" value="VWA"/>
    <property type="match status" value="1"/>
</dbReference>
<dbReference type="SUPFAM" id="SSF49562">
    <property type="entry name" value="C2 domain (Calcium/lipid-binding domain, CaLB)"/>
    <property type="match status" value="2"/>
</dbReference>
<dbReference type="SUPFAM" id="SSF53300">
    <property type="entry name" value="vWA-like"/>
    <property type="match status" value="1"/>
</dbReference>
<dbReference type="PROSITE" id="PS50004">
    <property type="entry name" value="C2"/>
    <property type="match status" value="2"/>
</dbReference>
<dbReference type="PROSITE" id="PS50234">
    <property type="entry name" value="VWFA"/>
    <property type="match status" value="1"/>
</dbReference>
<sequence length="593" mass="65734">MEQPEDMASLSEFDSLAGSIPATKVEITVSCRNLLDKDMFSKSDPLCVMYTQGMENKQWREFGRTEVIDNTLNPDFVRKFIVDYFFEEKQNLRFDLYDVDSKSPDLSKHDFLGQAFCTLGEIVGSPGSRLEKPLTIGAFSLNSRTGKPMPAVSNGGVPGKKCGTIILSAEELSNCRDVATMQFCANKLDKKDFFGKSDPFLVFYRSNEDGTFTICHKTEVMKNTLNPVWQTFSIPVRALCNGDYDRTIKVEVYDWDRDGSHDFIGEFTTSYRELARGQSQFNIYEVVNPKKKMKKKKYVNSGTVTLLSFAVESECTFLDYIKGGTQINFTVAIDFTASNGNPSQSTSLHYMSPYQLNAYALALTAVGEIIQHYDSDKMFPALGFGAKLPPDGRVSHEFPLNGNQENPSCCGIDGILEAYHRSLRTVQLYGPTNFAPVVTHVARNAAAVQDGSQYSVLLIITDGVISDMAQTKEAIVNAAKLPMSIIIVGVGQAEFDAMVELDGDDVRISSRGKLAERDIVQFVPFRDYVDRTGNHVLSMARLARDVLAEIPDQLVSYMKAQGIRPRPPPAAPTHSPSQSPARTPPASPLHTHI</sequence>
<comment type="function">
    <text evidence="2 7">Probable calcium-dependent phospholipid-binding protein that may play a role in calcium-mediated intracellular processes (By similarity). Plays a role in dendrite formation by melanocytes (PubMed:23999003).</text>
</comment>
<comment type="cofactor">
    <cofactor evidence="3">
        <name>Ca(2+)</name>
        <dbReference type="ChEBI" id="CHEBI:29108"/>
    </cofactor>
    <text evidence="3">Binds 3 Ca(2+) ions per C2 domain.</text>
</comment>
<comment type="subcellular location">
    <subcellularLocation>
        <location evidence="1">Perikaryon</location>
    </subcellularLocation>
    <subcellularLocation>
        <location evidence="1">Cell projection</location>
    </subcellularLocation>
</comment>
<comment type="alternative products">
    <event type="alternative splicing"/>
    <isoform>
        <id>Q9HCH3-1</id>
        <name>1</name>
        <sequence type="displayed"/>
    </isoform>
    <isoform>
        <id>Q9HCH3-2</id>
        <name>2</name>
        <sequence type="described" ref="VSP_056535"/>
    </isoform>
</comment>
<comment type="tissue specificity">
    <text evidence="6 7">Expressed in the brain, heart, stomach, spleen, lymph node and testis (PubMed:12949241). Expressed in melanocytes (PubMed:23999003).</text>
</comment>
<comment type="similarity">
    <text evidence="10">Belongs to the copine family.</text>
</comment>
<comment type="sequence caution" evidence="10">
    <conflict type="erroneous initiation">
        <sequence resource="EMBL-CDS" id="BAB13425"/>
    </conflict>
</comment>